<gene>
    <name type="primary">DUT1</name>
    <name type="ordered locus">CAALFM_C101330CA</name>
    <name type="ORF">CaO19.10832</name>
    <name type="ORF">CaO19.3322</name>
</gene>
<reference key="1">
    <citation type="journal article" date="2004" name="Proc. Natl. Acad. Sci. U.S.A.">
        <title>The diploid genome sequence of Candida albicans.</title>
        <authorList>
            <person name="Jones T."/>
            <person name="Federspiel N.A."/>
            <person name="Chibana H."/>
            <person name="Dungan J."/>
            <person name="Kalman S."/>
            <person name="Magee B.B."/>
            <person name="Newport G."/>
            <person name="Thorstenson Y.R."/>
            <person name="Agabian N."/>
            <person name="Magee P.T."/>
            <person name="Davis R.W."/>
            <person name="Scherer S."/>
        </authorList>
    </citation>
    <scope>NUCLEOTIDE SEQUENCE [LARGE SCALE GENOMIC DNA]</scope>
    <source>
        <strain>SC5314 / ATCC MYA-2876</strain>
    </source>
</reference>
<reference key="2">
    <citation type="journal article" date="2007" name="Genome Biol.">
        <title>Assembly of the Candida albicans genome into sixteen supercontigs aligned on the eight chromosomes.</title>
        <authorList>
            <person name="van het Hoog M."/>
            <person name="Rast T.J."/>
            <person name="Martchenko M."/>
            <person name="Grindle S."/>
            <person name="Dignard D."/>
            <person name="Hogues H."/>
            <person name="Cuomo C."/>
            <person name="Berriman M."/>
            <person name="Scherer S."/>
            <person name="Magee B.B."/>
            <person name="Whiteway M."/>
            <person name="Chibana H."/>
            <person name="Nantel A."/>
            <person name="Magee P.T."/>
        </authorList>
    </citation>
    <scope>GENOME REANNOTATION</scope>
    <source>
        <strain>SC5314 / ATCC MYA-2876</strain>
    </source>
</reference>
<reference key="3">
    <citation type="journal article" date="2013" name="Genome Biol.">
        <title>Assembly of a phased diploid Candida albicans genome facilitates allele-specific measurements and provides a simple model for repeat and indel structure.</title>
        <authorList>
            <person name="Muzzey D."/>
            <person name="Schwartz K."/>
            <person name="Weissman J.S."/>
            <person name="Sherlock G."/>
        </authorList>
    </citation>
    <scope>NUCLEOTIDE SEQUENCE [LARGE SCALE GENOMIC DNA]</scope>
    <scope>GENOME REANNOTATION</scope>
    <source>
        <strain>SC5314 / ATCC MYA-2876</strain>
    </source>
</reference>
<organism>
    <name type="scientific">Candida albicans (strain SC5314 / ATCC MYA-2876)</name>
    <name type="common">Yeast</name>
    <dbReference type="NCBI Taxonomy" id="237561"/>
    <lineage>
        <taxon>Eukaryota</taxon>
        <taxon>Fungi</taxon>
        <taxon>Dikarya</taxon>
        <taxon>Ascomycota</taxon>
        <taxon>Saccharomycotina</taxon>
        <taxon>Pichiomycetes</taxon>
        <taxon>Debaryomycetaceae</taxon>
        <taxon>Candida/Lodderomyces clade</taxon>
        <taxon>Candida</taxon>
    </lineage>
</organism>
<keyword id="KW-0378">Hydrolase</keyword>
<keyword id="KW-0460">Magnesium</keyword>
<keyword id="KW-0479">Metal-binding</keyword>
<keyword id="KW-0546">Nucleotide metabolism</keyword>
<keyword id="KW-1185">Reference proteome</keyword>
<protein>
    <recommendedName>
        <fullName evidence="1">Deoxyuridine 5'-triphosphate nucleotidohydrolase</fullName>
        <shortName evidence="1">dUTPase</shortName>
        <ecNumber evidence="1">3.6.1.23</ecNumber>
    </recommendedName>
    <alternativeName>
        <fullName>dUTP pyrophosphatase</fullName>
    </alternativeName>
</protein>
<feature type="chain" id="PRO_0000182930" description="Deoxyuridine 5'-triphosphate nucleotidohydrolase">
    <location>
        <begin position="1"/>
        <end position="159"/>
    </location>
</feature>
<feature type="binding site" evidence="1">
    <location>
        <position position="79"/>
    </location>
    <ligand>
        <name>dUMP</name>
        <dbReference type="ChEBI" id="CHEBI:246422"/>
    </ligand>
</feature>
<feature type="binding site" evidence="1">
    <location>
        <position position="92"/>
    </location>
    <ligand>
        <name>dUMP</name>
        <dbReference type="ChEBI" id="CHEBI:246422"/>
    </ligand>
</feature>
<feature type="binding site" evidence="1">
    <location>
        <position position="95"/>
    </location>
    <ligand>
        <name>dUMP</name>
        <dbReference type="ChEBI" id="CHEBI:246422"/>
    </ligand>
</feature>
<feature type="binding site" evidence="1">
    <location>
        <position position="98"/>
    </location>
    <ligand>
        <name>dUMP</name>
        <dbReference type="ChEBI" id="CHEBI:246422"/>
    </ligand>
</feature>
<feature type="binding site" evidence="1">
    <location>
        <position position="103"/>
    </location>
    <ligand>
        <name>dUMP</name>
        <dbReference type="ChEBI" id="CHEBI:246422"/>
    </ligand>
</feature>
<feature type="binding site" evidence="1">
    <location>
        <position position="148"/>
    </location>
    <ligand>
        <name>dUMP</name>
        <dbReference type="ChEBI" id="CHEBI:246422"/>
    </ligand>
</feature>
<feature type="binding site" evidence="1">
    <location>
        <position position="153"/>
    </location>
    <ligand>
        <name>dUMP</name>
        <dbReference type="ChEBI" id="CHEBI:246422"/>
    </ligand>
</feature>
<feature type="binding site" evidence="1">
    <location>
        <position position="154"/>
    </location>
    <ligand>
        <name>dUMP</name>
        <dbReference type="ChEBI" id="CHEBI:246422"/>
    </ligand>
</feature>
<accession>P0CY19</accession>
<accession>A0A1D8PCH6</accession>
<accession>P43058</accession>
<accession>Q5A912</accession>
<comment type="function">
    <text evidence="1">Involved in nucleotide metabolism via production of dUMP, the immediate precursor of thymidine nucleotides, and decreases the intracellular concentration of dUTP so that uracil cannot be incorporated into DNA.</text>
</comment>
<comment type="catalytic activity">
    <reaction evidence="1">
        <text>dUTP + H2O = dUMP + diphosphate + H(+)</text>
        <dbReference type="Rhea" id="RHEA:10248"/>
        <dbReference type="ChEBI" id="CHEBI:15377"/>
        <dbReference type="ChEBI" id="CHEBI:15378"/>
        <dbReference type="ChEBI" id="CHEBI:33019"/>
        <dbReference type="ChEBI" id="CHEBI:61555"/>
        <dbReference type="ChEBI" id="CHEBI:246422"/>
        <dbReference type="EC" id="3.6.1.23"/>
    </reaction>
    <physiologicalReaction direction="left-to-right" evidence="1">
        <dbReference type="Rhea" id="RHEA:10249"/>
    </physiologicalReaction>
</comment>
<comment type="cofactor">
    <cofactor evidence="1">
        <name>Mg(2+)</name>
        <dbReference type="ChEBI" id="CHEBI:18420"/>
    </cofactor>
</comment>
<comment type="pathway">
    <text>Pyrimidine metabolism; dUMP biosynthesis; dUMP from dCTP (dUTP route): step 2/2.</text>
</comment>
<comment type="subunit">
    <text evidence="1">Homotrimer.</text>
</comment>
<comment type="similarity">
    <text evidence="2">Belongs to the dUTPase family.</text>
</comment>
<sequence>MTSEDQSLKKQKLESTQSLKVYLRSPKGKVPTKGSALAAGYDLYSAEAATIPAHGQGLVSTDISIIVPIGTYGRVAPRSGLAVKHGISTGAGVIDADYRGEVKVVLFNHSEKDFEIKEGDRIAQLVLEQIVNADIKEISLEELDNTERGEGGFGSTGKN</sequence>
<evidence type="ECO:0000250" key="1">
    <source>
        <dbReference type="UniProtKB" id="P33317"/>
    </source>
</evidence>
<evidence type="ECO:0000305" key="2"/>
<proteinExistence type="inferred from homology"/>
<name>DUT_CANAL</name>
<dbReference type="EC" id="3.6.1.23" evidence="1"/>
<dbReference type="EMBL" id="CP017623">
    <property type="protein sequence ID" value="AOW25826.1"/>
    <property type="molecule type" value="Genomic_DNA"/>
</dbReference>
<dbReference type="PIR" id="S51498">
    <property type="entry name" value="S51498"/>
</dbReference>
<dbReference type="RefSeq" id="XP_718145.1">
    <property type="nucleotide sequence ID" value="XM_713052.1"/>
</dbReference>
<dbReference type="SMR" id="P0CY19"/>
<dbReference type="FunCoup" id="P0CY19">
    <property type="interactions" value="1216"/>
</dbReference>
<dbReference type="STRING" id="237561.P0CY19"/>
<dbReference type="EnsemblFungi" id="C1_01330C_A-T">
    <property type="protein sequence ID" value="C1_01330C_A-T-p1"/>
    <property type="gene ID" value="C1_01330C_A"/>
</dbReference>
<dbReference type="GeneID" id="3640188"/>
<dbReference type="KEGG" id="cal:CAALFM_C101330CA"/>
<dbReference type="CGD" id="CAL0000195525">
    <property type="gene designation" value="DUT1"/>
</dbReference>
<dbReference type="VEuPathDB" id="FungiDB:C1_01330C_A"/>
<dbReference type="eggNOG" id="KOG3370">
    <property type="taxonomic scope" value="Eukaryota"/>
</dbReference>
<dbReference type="HOGENOM" id="CLU_068508_2_1_1"/>
<dbReference type="InParanoid" id="P0CY19"/>
<dbReference type="OMA" id="RSGMGHK"/>
<dbReference type="OrthoDB" id="419889at2759"/>
<dbReference type="UniPathway" id="UPA00610">
    <property type="reaction ID" value="UER00666"/>
</dbReference>
<dbReference type="PRO" id="PR:P0CY19"/>
<dbReference type="Proteomes" id="UP000000559">
    <property type="component" value="Chromosome 1"/>
</dbReference>
<dbReference type="GO" id="GO:0035870">
    <property type="term" value="F:dITP diphosphatase activity"/>
    <property type="evidence" value="ECO:0007669"/>
    <property type="project" value="EnsemblFungi"/>
</dbReference>
<dbReference type="GO" id="GO:0004170">
    <property type="term" value="F:dUTP diphosphatase activity"/>
    <property type="evidence" value="ECO:0000314"/>
    <property type="project" value="CGD"/>
</dbReference>
<dbReference type="GO" id="GO:0000287">
    <property type="term" value="F:magnesium ion binding"/>
    <property type="evidence" value="ECO:0000318"/>
    <property type="project" value="GO_Central"/>
</dbReference>
<dbReference type="GO" id="GO:0035863">
    <property type="term" value="P:dITP catabolic process"/>
    <property type="evidence" value="ECO:0007669"/>
    <property type="project" value="EnsemblFungi"/>
</dbReference>
<dbReference type="GO" id="GO:0006226">
    <property type="term" value="P:dUMP biosynthetic process"/>
    <property type="evidence" value="ECO:0000318"/>
    <property type="project" value="GO_Central"/>
</dbReference>
<dbReference type="GO" id="GO:0046081">
    <property type="term" value="P:dUTP catabolic process"/>
    <property type="evidence" value="ECO:0000318"/>
    <property type="project" value="GO_Central"/>
</dbReference>
<dbReference type="CDD" id="cd07557">
    <property type="entry name" value="trimeric_dUTPase"/>
    <property type="match status" value="1"/>
</dbReference>
<dbReference type="FunFam" id="2.70.40.10:FF:000007">
    <property type="entry name" value="dUTP pyrophosphatase"/>
    <property type="match status" value="1"/>
</dbReference>
<dbReference type="Gene3D" id="2.70.40.10">
    <property type="match status" value="1"/>
</dbReference>
<dbReference type="InterPro" id="IPR008181">
    <property type="entry name" value="dUTPase"/>
</dbReference>
<dbReference type="InterPro" id="IPR029054">
    <property type="entry name" value="dUTPase-like"/>
</dbReference>
<dbReference type="InterPro" id="IPR036157">
    <property type="entry name" value="dUTPase-like_sf"/>
</dbReference>
<dbReference type="InterPro" id="IPR033704">
    <property type="entry name" value="dUTPase_trimeric"/>
</dbReference>
<dbReference type="NCBIfam" id="TIGR00576">
    <property type="entry name" value="dut"/>
    <property type="match status" value="1"/>
</dbReference>
<dbReference type="NCBIfam" id="NF001862">
    <property type="entry name" value="PRK00601.1"/>
    <property type="match status" value="1"/>
</dbReference>
<dbReference type="PANTHER" id="PTHR11241">
    <property type="entry name" value="DEOXYURIDINE 5'-TRIPHOSPHATE NUCLEOTIDOHYDROLASE"/>
    <property type="match status" value="1"/>
</dbReference>
<dbReference type="PANTHER" id="PTHR11241:SF0">
    <property type="entry name" value="DEOXYURIDINE 5'-TRIPHOSPHATE NUCLEOTIDOHYDROLASE"/>
    <property type="match status" value="1"/>
</dbReference>
<dbReference type="Pfam" id="PF00692">
    <property type="entry name" value="dUTPase"/>
    <property type="match status" value="1"/>
</dbReference>
<dbReference type="SUPFAM" id="SSF51283">
    <property type="entry name" value="dUTPase-like"/>
    <property type="match status" value="1"/>
</dbReference>